<keyword id="KW-0020">Allergen</keyword>
<keyword id="KW-0903">Direct protein sequencing</keyword>
<keyword id="KW-1015">Disulfide bond</keyword>
<keyword id="KW-0446">Lipid-binding</keyword>
<keyword id="KW-0732">Signal</keyword>
<keyword id="KW-0813">Transport</keyword>
<accession>E6Y8S8</accession>
<dbReference type="EMBL" id="FJ643539">
    <property type="protein sequence ID" value="ACV04796.1"/>
    <property type="molecule type" value="mRNA"/>
</dbReference>
<dbReference type="SMR" id="E6Y8S8"/>
<dbReference type="Allergome" id="5890">
    <property type="allergen name" value="Api g 2"/>
</dbReference>
<dbReference type="Allergome" id="5891">
    <property type="allergen name" value="Api g 2.0101"/>
</dbReference>
<dbReference type="GO" id="GO:0008289">
    <property type="term" value="F:lipid binding"/>
    <property type="evidence" value="ECO:0007669"/>
    <property type="project" value="UniProtKB-KW"/>
</dbReference>
<dbReference type="GO" id="GO:0006869">
    <property type="term" value="P:lipid transport"/>
    <property type="evidence" value="ECO:0007669"/>
    <property type="project" value="InterPro"/>
</dbReference>
<dbReference type="CDD" id="cd01960">
    <property type="entry name" value="nsLTP1"/>
    <property type="match status" value="1"/>
</dbReference>
<dbReference type="FunFam" id="1.10.110.10:FF:000002">
    <property type="entry name" value="Non-specific lipid-transfer protein"/>
    <property type="match status" value="1"/>
</dbReference>
<dbReference type="Gene3D" id="1.10.110.10">
    <property type="entry name" value="Plant lipid-transfer and hydrophobic proteins"/>
    <property type="match status" value="1"/>
</dbReference>
<dbReference type="InterPro" id="IPR036312">
    <property type="entry name" value="Bifun_inhib/LTP/seed_sf"/>
</dbReference>
<dbReference type="InterPro" id="IPR016140">
    <property type="entry name" value="Bifunc_inhib/LTP/seed_store"/>
</dbReference>
<dbReference type="InterPro" id="IPR000528">
    <property type="entry name" value="Plant_nsLTP"/>
</dbReference>
<dbReference type="PANTHER" id="PTHR33076">
    <property type="entry name" value="NON-SPECIFIC LIPID-TRANSFER PROTEIN 2-RELATED"/>
    <property type="match status" value="1"/>
</dbReference>
<dbReference type="Pfam" id="PF00234">
    <property type="entry name" value="Tryp_alpha_amyl"/>
    <property type="match status" value="1"/>
</dbReference>
<dbReference type="PRINTS" id="PR00382">
    <property type="entry name" value="LIPIDTRNSFER"/>
</dbReference>
<dbReference type="SMART" id="SM00499">
    <property type="entry name" value="AAI"/>
    <property type="match status" value="1"/>
</dbReference>
<dbReference type="SUPFAM" id="SSF47699">
    <property type="entry name" value="Bifunctional inhibitor/lipid-transfer protein/seed storage 2S albumin"/>
    <property type="match status" value="1"/>
</dbReference>
<dbReference type="PROSITE" id="PS00597">
    <property type="entry name" value="PLANT_LTP"/>
    <property type="match status" value="1"/>
</dbReference>
<sequence length="118" mass="11750">MGVSKVAIAVAVMLMVVVINHPAVVEGLTCGQVTGKLGGCLGYLKGGGYPSPACCGGVKGLNSLAKTPADRKQACACLKTLAGSVKGINYGAASALPGKCGIRIPYPISPSTDCSRVN</sequence>
<proteinExistence type="evidence at protein level"/>
<evidence type="ECO:0000250" key="1">
    <source>
        <dbReference type="UniProtKB" id="Q10ST8"/>
    </source>
</evidence>
<evidence type="ECO:0000250" key="2">
    <source>
        <dbReference type="UniProtKB" id="Q43748"/>
    </source>
</evidence>
<evidence type="ECO:0000255" key="3"/>
<evidence type="ECO:0000269" key="4">
    <source>
    </source>
</evidence>
<evidence type="ECO:0000269" key="5">
    <source>
    </source>
</evidence>
<evidence type="ECO:0000269" key="6">
    <source>
    </source>
</evidence>
<evidence type="ECO:0000303" key="7">
    <source>
    </source>
</evidence>
<evidence type="ECO:0000305" key="8"/>
<evidence type="ECO:0000312" key="9">
    <source>
        <dbReference type="EMBL" id="ACV04796.1"/>
    </source>
</evidence>
<reference evidence="9" key="1">
    <citation type="journal article" date="2011" name="Mol. Nutr. Food Res.">
        <title>Molecular characterization of Api g 2, a novel allergenic member of the lipid-transfer protein 1 family from celery stalks.</title>
        <authorList>
            <person name="Gadermaier G."/>
            <person name="Egger M."/>
            <person name="Girbl T."/>
            <person name="Erler A."/>
            <person name="Harrer A."/>
            <person name="Vejvar E."/>
            <person name="Liso M."/>
            <person name="Richter K."/>
            <person name="Zuidmeer L."/>
            <person name="Mari A."/>
            <person name="Ferreira F."/>
        </authorList>
    </citation>
    <scope>NUCLEOTIDE SEQUENCE [MRNA]</scope>
    <scope>PARTIAL PROTEIN SEQUENCE</scope>
    <scope>BIOPHYSICOCHEMICAL PROPERTIES</scope>
    <scope>DISULFIDE BONDS</scope>
    <scope>MASS SPECTROMETRY</scope>
    <scope>ALLERGEN</scope>
    <scope>IGE-BINDING</scope>
</reference>
<reference evidence="8" key="2">
    <citation type="journal article" date="2011" name="PLoS ONE">
        <title>Sensitization prevalence, antibody cross-reactivity and immunogenic peptide profile of Api g 2, the non-specific lipid transfer protein 1 of celery.</title>
        <authorList>
            <person name="Gadermaier G."/>
            <person name="Hauser M."/>
            <person name="Egger M."/>
            <person name="Ferrara R."/>
            <person name="Briza P."/>
            <person name="Santos K.S."/>
            <person name="Zennaro D."/>
            <person name="Girbl T."/>
            <person name="Zuidmeer-Jongejan L."/>
            <person name="Mari A."/>
            <person name="Ferreira F."/>
        </authorList>
    </citation>
    <scope>IGE-BINDING</scope>
</reference>
<reference evidence="8" key="3">
    <citation type="journal article" date="2013" name="Mol. Nutr. Food Res.">
        <title>Allergenic relevance of nonspecific lipid transfer proteins 2: Identification and characterization of Api g 6 from celery tuber as representative of a novel IgE-binding protein family.</title>
        <authorList>
            <person name="Vejvar E."/>
            <person name="Himly M."/>
            <person name="Briza P."/>
            <person name="Eichhorn S."/>
            <person name="Ebner C."/>
            <person name="Hemmer W."/>
            <person name="Ferreira F."/>
            <person name="Gadermaier G."/>
        </authorList>
    </citation>
    <scope>IGE-BINDING</scope>
</reference>
<comment type="function">
    <text evidence="2">Plant non-specific lipid-transfer proteins transfer phospholipids as well as galactolipids across membranes. May play a role in wax or cutin deposition in the cell walls of expanding epidermal cells and certain secretory tissues (By similarity).</text>
</comment>
<comment type="biophysicochemical properties">
    <phDependence>
        <text evidence="4">Stable at pH 3.</text>
    </phDependence>
    <temperatureDependence>
        <text evidence="4">Stable up to 84 degrees Celsius.</text>
    </temperatureDependence>
</comment>
<comment type="PTM">
    <text evidence="4">Disulfide bonds.</text>
</comment>
<comment type="mass spectrometry" mass="9024.5" method="Electrospray" evidence="4"/>
<comment type="allergen">
    <text evidence="4 5 6">Causes an allergic reaction in human. Binds to IgE.</text>
</comment>
<comment type="miscellaneous">
    <text evidence="4 6">Found in celery but not in celeriac. Highly resistant to pepsin and other proteinases.</text>
</comment>
<comment type="similarity">
    <text evidence="3">Belongs to the plant LTP family.</text>
</comment>
<name>NLTP1_APIGR</name>
<feature type="signal peptide" evidence="4">
    <location>
        <begin position="1"/>
        <end position="27"/>
    </location>
</feature>
<feature type="chain" id="PRO_5000680950" description="Non-specific lipid-transfer protein" evidence="4">
    <location>
        <begin position="28"/>
        <end position="118"/>
    </location>
</feature>
<feature type="disulfide bond" evidence="1">
    <location>
        <begin position="30"/>
        <end position="75"/>
    </location>
</feature>
<feature type="disulfide bond" evidence="1">
    <location>
        <begin position="40"/>
        <end position="54"/>
    </location>
</feature>
<feature type="disulfide bond" evidence="1">
    <location>
        <begin position="55"/>
        <end position="100"/>
    </location>
</feature>
<feature type="disulfide bond" evidence="1">
    <location>
        <begin position="77"/>
        <end position="114"/>
    </location>
</feature>
<organism>
    <name type="scientific">Apium graveolens</name>
    <name type="common">Celery</name>
    <dbReference type="NCBI Taxonomy" id="4045"/>
    <lineage>
        <taxon>Eukaryota</taxon>
        <taxon>Viridiplantae</taxon>
        <taxon>Streptophyta</taxon>
        <taxon>Embryophyta</taxon>
        <taxon>Tracheophyta</taxon>
        <taxon>Spermatophyta</taxon>
        <taxon>Magnoliopsida</taxon>
        <taxon>eudicotyledons</taxon>
        <taxon>Gunneridae</taxon>
        <taxon>Pentapetalae</taxon>
        <taxon>asterids</taxon>
        <taxon>campanulids</taxon>
        <taxon>Apiales</taxon>
        <taxon>Apiaceae</taxon>
        <taxon>Apioideae</taxon>
        <taxon>apioid superclade</taxon>
        <taxon>Apieae</taxon>
        <taxon>Apium</taxon>
    </lineage>
</organism>
<protein>
    <recommendedName>
        <fullName evidence="7">Non-specific lipid-transfer protein</fullName>
    </recommendedName>
    <alternativeName>
        <fullName evidence="7">Allergen Api g 2.0101</fullName>
    </alternativeName>
    <allergenName evidence="7">Api g 2</allergenName>
</protein>